<accession>Q8E3S5</accession>
<protein>
    <recommendedName>
        <fullName evidence="1">UPF0397 protein gbs1681</fullName>
    </recommendedName>
</protein>
<organism>
    <name type="scientific">Streptococcus agalactiae serotype III (strain NEM316)</name>
    <dbReference type="NCBI Taxonomy" id="211110"/>
    <lineage>
        <taxon>Bacteria</taxon>
        <taxon>Bacillati</taxon>
        <taxon>Bacillota</taxon>
        <taxon>Bacilli</taxon>
        <taxon>Lactobacillales</taxon>
        <taxon>Streptococcaceae</taxon>
        <taxon>Streptococcus</taxon>
    </lineage>
</organism>
<sequence length="182" mass="19488">MNTNTIKKVVATGIGAALFIIIGMLVNIPTPIPNTNIQLQYAVLALFAVIYGPGVGFFTGFIGHALKDSIQYGSPWWTWVLVSGLLGLMIGFFAKKLAIQLSGMTKKDLLLFNVVQVIANLIGWSVVAPYGDIFFYSEPASKVFAQGFLSSLVNSITIGVGGTLLLLAYAKSRPQKGSLSKD</sequence>
<feature type="chain" id="PRO_0000260811" description="UPF0397 protein gbs1681">
    <location>
        <begin position="1"/>
        <end position="182"/>
    </location>
</feature>
<feature type="transmembrane region" description="Helical" evidence="1">
    <location>
        <begin position="9"/>
        <end position="29"/>
    </location>
</feature>
<feature type="transmembrane region" description="Helical" evidence="1">
    <location>
        <begin position="42"/>
        <end position="62"/>
    </location>
</feature>
<feature type="transmembrane region" description="Helical" evidence="1">
    <location>
        <begin position="74"/>
        <end position="94"/>
    </location>
</feature>
<feature type="transmembrane region" description="Helical" evidence="1">
    <location>
        <begin position="109"/>
        <end position="129"/>
    </location>
</feature>
<feature type="transmembrane region" description="Helical" evidence="1">
    <location>
        <begin position="148"/>
        <end position="168"/>
    </location>
</feature>
<name>Y1681_STRA3</name>
<dbReference type="EMBL" id="AL766852">
    <property type="protein sequence ID" value="CAD47340.1"/>
    <property type="molecule type" value="Genomic_DNA"/>
</dbReference>
<dbReference type="RefSeq" id="WP_001095696.1">
    <property type="nucleotide sequence ID" value="NC_004368.1"/>
</dbReference>
<dbReference type="SMR" id="Q8E3S5"/>
<dbReference type="KEGG" id="san:gbs1681"/>
<dbReference type="eggNOG" id="COG4720">
    <property type="taxonomic scope" value="Bacteria"/>
</dbReference>
<dbReference type="HOGENOM" id="CLU_120023_0_0_9"/>
<dbReference type="Proteomes" id="UP000000823">
    <property type="component" value="Chromosome"/>
</dbReference>
<dbReference type="GO" id="GO:0005886">
    <property type="term" value="C:plasma membrane"/>
    <property type="evidence" value="ECO:0007669"/>
    <property type="project" value="UniProtKB-SubCell"/>
</dbReference>
<dbReference type="Gene3D" id="1.10.1760.20">
    <property type="match status" value="1"/>
</dbReference>
<dbReference type="HAMAP" id="MF_01572">
    <property type="entry name" value="UPF0397"/>
    <property type="match status" value="1"/>
</dbReference>
<dbReference type="InterPro" id="IPR009825">
    <property type="entry name" value="ECF_substrate-spec-like"/>
</dbReference>
<dbReference type="InterPro" id="IPR022914">
    <property type="entry name" value="UPF0397"/>
</dbReference>
<dbReference type="NCBIfam" id="NF010182">
    <property type="entry name" value="PRK13661.1"/>
    <property type="match status" value="1"/>
</dbReference>
<dbReference type="PANTHER" id="PTHR37815">
    <property type="entry name" value="UPF0397 PROTEIN BC_2624-RELATED"/>
    <property type="match status" value="1"/>
</dbReference>
<dbReference type="PANTHER" id="PTHR37815:SF3">
    <property type="entry name" value="UPF0397 PROTEIN SPR0429"/>
    <property type="match status" value="1"/>
</dbReference>
<dbReference type="Pfam" id="PF07155">
    <property type="entry name" value="ECF-ribofla_trS"/>
    <property type="match status" value="1"/>
</dbReference>
<proteinExistence type="inferred from homology"/>
<keyword id="KW-1003">Cell membrane</keyword>
<keyword id="KW-0472">Membrane</keyword>
<keyword id="KW-0812">Transmembrane</keyword>
<keyword id="KW-1133">Transmembrane helix</keyword>
<gene>
    <name type="ordered locus">gbs1681</name>
</gene>
<evidence type="ECO:0000255" key="1">
    <source>
        <dbReference type="HAMAP-Rule" id="MF_01572"/>
    </source>
</evidence>
<reference key="1">
    <citation type="journal article" date="2002" name="Mol. Microbiol.">
        <title>Genome sequence of Streptococcus agalactiae, a pathogen causing invasive neonatal disease.</title>
        <authorList>
            <person name="Glaser P."/>
            <person name="Rusniok C."/>
            <person name="Buchrieser C."/>
            <person name="Chevalier F."/>
            <person name="Frangeul L."/>
            <person name="Msadek T."/>
            <person name="Zouine M."/>
            <person name="Couve E."/>
            <person name="Lalioui L."/>
            <person name="Poyart C."/>
            <person name="Trieu-Cuot P."/>
            <person name="Kunst F."/>
        </authorList>
    </citation>
    <scope>NUCLEOTIDE SEQUENCE [LARGE SCALE GENOMIC DNA]</scope>
    <source>
        <strain>NEM316</strain>
    </source>
</reference>
<comment type="subcellular location">
    <subcellularLocation>
        <location evidence="1">Cell membrane</location>
        <topology evidence="1">Multi-pass membrane protein</topology>
    </subcellularLocation>
</comment>
<comment type="similarity">
    <text evidence="1">Belongs to the UPF0397 family.</text>
</comment>